<proteinExistence type="evidence at protein level"/>
<comment type="function">
    <text evidence="2 5 6 7">Involved in the last two steps of the degradation of uric acid, i.e. the hydrolysis of 5-hydroxyisourate (HIU) to 2-oxo-4-hydroxy-4-carboxy-5-ureidoimidazoline (OHCU) and its stereoselective decarboxylation to (S)-allantoin, a major ureide compound (PubMed:20167108, PubMed:20511299). Might function as a negative regulator to modulate brassinosteroid-mediated plant growth (PubMed:15319482). Together with B1L, prevents plant growth and development, but by opposition to B1L, negatively regulates cold tolerance, probably in a brassinosteroid (BR) and allantoin-dependent manner (PubMed:32664862).</text>
</comment>
<comment type="catalytic activity">
    <reaction evidence="5 6">
        <text>5-hydroxyisourate + H2O = 5-hydroxy-2-oxo-4-ureido-2,5-dihydro-1H-imidazole-5-carboxylate + H(+)</text>
        <dbReference type="Rhea" id="RHEA:23736"/>
        <dbReference type="ChEBI" id="CHEBI:15377"/>
        <dbReference type="ChEBI" id="CHEBI:15378"/>
        <dbReference type="ChEBI" id="CHEBI:18072"/>
        <dbReference type="ChEBI" id="CHEBI:58639"/>
        <dbReference type="EC" id="3.5.2.17"/>
    </reaction>
</comment>
<comment type="catalytic activity">
    <reaction evidence="5 6">
        <text>5-hydroxy-2-oxo-4-ureido-2,5-dihydro-1H-imidazole-5-carboxylate + H(+) = (S)-allantoin + CO2</text>
        <dbReference type="Rhea" id="RHEA:26301"/>
        <dbReference type="ChEBI" id="CHEBI:15378"/>
        <dbReference type="ChEBI" id="CHEBI:15678"/>
        <dbReference type="ChEBI" id="CHEBI:16526"/>
        <dbReference type="ChEBI" id="CHEBI:58639"/>
        <dbReference type="EC" id="4.1.1.97"/>
    </reaction>
</comment>
<comment type="pathway">
    <text evidence="5 6">Purine metabolism; urate degradation; (S)-allantoin from urate: step 2/3.</text>
</comment>
<comment type="pathway">
    <text evidence="5 6">Purine metabolism; urate degradation; (S)-allantoin from urate: step 3/3.</text>
</comment>
<comment type="subunit">
    <text evidence="2 3 5 7">Homodimer. Forms tetramers (PubMed:20167108). Interacts with BRI1 in a kinase-dependent manner (PubMed:15319482). Interacts with B1L (PubMed:32664862).</text>
</comment>
<comment type="interaction">
    <interactant intactId="EBI-1803584">
        <id>Q9LVM5</id>
    </interactant>
    <interactant intactId="EBI-1797828">
        <id>O22476</id>
        <label>BRI1</label>
    </interactant>
    <organismsDiffer>false</organismsDiffer>
    <experiments>3</experiments>
</comment>
<comment type="interaction">
    <interactant intactId="EBI-1803584">
        <id>Q9LVM5</id>
    </interactant>
    <interactant intactId="EBI-2015534">
        <id>Q8W4D8</id>
        <label>DDL</label>
    </interactant>
    <organismsDiffer>false</organismsDiffer>
    <experiments>4</experiments>
</comment>
<comment type="interaction">
    <interactant intactId="EBI-1803584">
        <id>Q9LVM5</id>
    </interactant>
    <interactant intactId="EBI-1803584">
        <id>Q9LVM5</id>
        <label>TTL</label>
    </interactant>
    <organismsDiffer>false</organismsDiffer>
    <experiments>4</experiments>
</comment>
<comment type="subcellular location">
    <subcellularLocation>
        <location evidence="2">Cell membrane</location>
        <topology evidence="2">Peripheral membrane protein</topology>
        <orientation evidence="2">Cytoplasmic side</orientation>
    </subcellularLocation>
    <subcellularLocation>
        <location evidence="4">Peroxisome</location>
    </subcellularLocation>
</comment>
<comment type="subcellular location">
    <molecule>Isoform 1</molecule>
    <subcellularLocation>
        <location evidence="6">Peroxisome</location>
    </subcellularLocation>
</comment>
<comment type="subcellular location">
    <molecule>Isoform 2</molecule>
    <subcellularLocation>
        <location evidence="6">Cytoplasm</location>
        <location evidence="6">Cytosol</location>
    </subcellularLocation>
</comment>
<comment type="alternative products">
    <event type="alternative splicing"/>
    <isoform>
        <id>Q9LVM5-1</id>
        <name>1</name>
        <name evidence="10">TTL1-</name>
        <sequence type="displayed"/>
    </isoform>
    <isoform>
        <id>Q9LVM5-2</id>
        <name>2</name>
        <name evidence="10">TTL1+</name>
        <sequence type="described" ref="VSP_030136"/>
    </isoform>
    <isoform>
        <id>Q9LVM5-3</id>
        <name>3</name>
        <sequence type="described" ref="VSP_030135"/>
    </isoform>
</comment>
<comment type="tissue specificity">
    <text evidence="2">Expressed ubiquitously with highest levels in flowers buds and elongating inflorescences.</text>
</comment>
<comment type="tissue specificity">
    <molecule>Isoform 1</molecule>
    <text evidence="6">Mainly expressed in stems and leaves, and, to a lower extent, in flowers, flower buds and seedlings.</text>
</comment>
<comment type="tissue specificity">
    <molecule>Isoform 2</molecule>
    <text evidence="6">Strongly expressed in flower buds and leaves, to a lower extent in stems, and at low levels in seedlings and flowers.</text>
</comment>
<comment type="induction">
    <text>Not regulated by plant steroids.</text>
</comment>
<comment type="domain">
    <text>The N-terminal 29 amino acids are essential, but not sufficient, for the interaction with BRI1.</text>
</comment>
<comment type="PTM">
    <text evidence="2">Phosphorylated by BRI1 in vitro.</text>
</comment>
<comment type="disruption phenotype">
    <text evidence="2 7">Longer hypocotyls and roots, as well as greater fresh weight due to plant growth promotion (PubMed:15319482, PubMed:32664862). Enhanced sensitivity to brassinosteroid (BR) in term of plant growth regulation (PubMed:15319482). Increased freezing tolerance to cold treatment (PubMed:32664862). The double mutant b1l ttl exhibits a developmental phenotype and freezing tolerance comparable to the single mutant ttl (PubMed:32664862).</text>
</comment>
<comment type="similarity">
    <text evidence="14">In the N-terminal section; belongs to the OHCU decarboxylase family.</text>
</comment>
<comment type="similarity">
    <text evidence="14">In the C-terminal section; belongs to the transthyretin family. 5-hydroxyisourate hydrolase subfamily.</text>
</comment>
<reference key="1">
    <citation type="journal article" date="2004" name="Plant Cell">
        <title>The Arabidopsis transthyretin-like protein is a potential substrate of BRASSINOSTEROID-INSENSITIVE 1.</title>
        <authorList>
            <person name="Nam K.H."/>
            <person name="Li J."/>
        </authorList>
    </citation>
    <scope>NUCLEOTIDE SEQUENCE [MRNA] (ISOFORM 1)</scope>
    <scope>FUNCTION</scope>
    <scope>DISRUPTION PHENOTYPE</scope>
    <scope>MUTAGENESIS OF 1-MET--PHE-29</scope>
    <scope>INTERACTION WITH BRI1</scope>
    <scope>PHOSPHORYLATION</scope>
    <scope>TISSUE SPECIFICITY</scope>
    <scope>SUBCELLULAR LOCATION</scope>
    <source>
        <strain>cv. Columbia</strain>
    </source>
</reference>
<reference key="2">
    <citation type="journal article" date="2000" name="DNA Res.">
        <title>Structural analysis of Arabidopsis thaliana chromosome 5. X. Sequence features of the regions of 3,076,755 bp covered by sixty P1 and TAC clones.</title>
        <authorList>
            <person name="Sato S."/>
            <person name="Nakamura Y."/>
            <person name="Kaneko T."/>
            <person name="Katoh T."/>
            <person name="Asamizu E."/>
            <person name="Kotani H."/>
            <person name="Tabata S."/>
        </authorList>
    </citation>
    <scope>NUCLEOTIDE SEQUENCE [LARGE SCALE GENOMIC DNA]</scope>
    <source>
        <strain>cv. Columbia</strain>
    </source>
</reference>
<reference key="3">
    <citation type="journal article" date="2017" name="Plant J.">
        <title>Araport11: a complete reannotation of the Arabidopsis thaliana reference genome.</title>
        <authorList>
            <person name="Cheng C.Y."/>
            <person name="Krishnakumar V."/>
            <person name="Chan A.P."/>
            <person name="Thibaud-Nissen F."/>
            <person name="Schobel S."/>
            <person name="Town C.D."/>
        </authorList>
    </citation>
    <scope>GENOME REANNOTATION</scope>
    <source>
        <strain>cv. Columbia</strain>
    </source>
</reference>
<reference key="4">
    <citation type="journal article" date="2003" name="Science">
        <title>Empirical analysis of transcriptional activity in the Arabidopsis genome.</title>
        <authorList>
            <person name="Yamada K."/>
            <person name="Lim J."/>
            <person name="Dale J.M."/>
            <person name="Chen H."/>
            <person name="Shinn P."/>
            <person name="Palm C.J."/>
            <person name="Southwick A.M."/>
            <person name="Wu H.C."/>
            <person name="Kim C.J."/>
            <person name="Nguyen M."/>
            <person name="Pham P.K."/>
            <person name="Cheuk R.F."/>
            <person name="Karlin-Newmann G."/>
            <person name="Liu S.X."/>
            <person name="Lam B."/>
            <person name="Sakano H."/>
            <person name="Wu T."/>
            <person name="Yu G."/>
            <person name="Miranda M."/>
            <person name="Quach H.L."/>
            <person name="Tripp M."/>
            <person name="Chang C.H."/>
            <person name="Lee J.M."/>
            <person name="Toriumi M.J."/>
            <person name="Chan M.M."/>
            <person name="Tang C.C."/>
            <person name="Onodera C.S."/>
            <person name="Deng J.M."/>
            <person name="Akiyama K."/>
            <person name="Ansari Y."/>
            <person name="Arakawa T."/>
            <person name="Banh J."/>
            <person name="Banno F."/>
            <person name="Bowser L."/>
            <person name="Brooks S.Y."/>
            <person name="Carninci P."/>
            <person name="Chao Q."/>
            <person name="Choy N."/>
            <person name="Enju A."/>
            <person name="Goldsmith A.D."/>
            <person name="Gurjal M."/>
            <person name="Hansen N.F."/>
            <person name="Hayashizaki Y."/>
            <person name="Johnson-Hopson C."/>
            <person name="Hsuan V.W."/>
            <person name="Iida K."/>
            <person name="Karnes M."/>
            <person name="Khan S."/>
            <person name="Koesema E."/>
            <person name="Ishida J."/>
            <person name="Jiang P.X."/>
            <person name="Jones T."/>
            <person name="Kawai J."/>
            <person name="Kamiya A."/>
            <person name="Meyers C."/>
            <person name="Nakajima M."/>
            <person name="Narusaka M."/>
            <person name="Seki M."/>
            <person name="Sakurai T."/>
            <person name="Satou M."/>
            <person name="Tamse R."/>
            <person name="Vaysberg M."/>
            <person name="Wallender E.K."/>
            <person name="Wong C."/>
            <person name="Yamamura Y."/>
            <person name="Yuan S."/>
            <person name="Shinozaki K."/>
            <person name="Davis R.W."/>
            <person name="Theologis A."/>
            <person name="Ecker J.R."/>
        </authorList>
    </citation>
    <scope>NUCLEOTIDE SEQUENCE [LARGE SCALE MRNA] (ISOFORM 1)</scope>
    <source>
        <strain>cv. Columbia</strain>
    </source>
</reference>
<reference key="5">
    <citation type="submission" date="2006-07" db="EMBL/GenBank/DDBJ databases">
        <title>Large-scale analysis of RIKEN Arabidopsis full-length (RAFL) cDNAs.</title>
        <authorList>
            <person name="Totoki Y."/>
            <person name="Seki M."/>
            <person name="Ishida J."/>
            <person name="Nakajima M."/>
            <person name="Enju A."/>
            <person name="Kamiya A."/>
            <person name="Narusaka M."/>
            <person name="Shin-i T."/>
            <person name="Nakagawa M."/>
            <person name="Sakamoto N."/>
            <person name="Oishi K."/>
            <person name="Kohara Y."/>
            <person name="Kobayashi M."/>
            <person name="Toyoda A."/>
            <person name="Sakaki Y."/>
            <person name="Sakurai T."/>
            <person name="Iida K."/>
            <person name="Akiyama K."/>
            <person name="Satou M."/>
            <person name="Toyoda T."/>
            <person name="Konagaya A."/>
            <person name="Carninci P."/>
            <person name="Kawai J."/>
            <person name="Hayashizaki Y."/>
            <person name="Shinozaki K."/>
        </authorList>
    </citation>
    <scope>NUCLEOTIDE SEQUENCE [LARGE SCALE MRNA] (ISOFORM 2)</scope>
    <source>
        <strain>cv. Columbia</strain>
    </source>
</reference>
<reference key="6">
    <citation type="journal article" date="2007" name="Plant Cell">
        <title>Proteome analysis of Arabidopsis leaf peroxisomes reveals novel targeting peptides, metabolic pathways, and defense mechanisms.</title>
        <authorList>
            <person name="Reumann S."/>
            <person name="Babujee L."/>
            <person name="Ma C."/>
            <person name="Wienkoop S."/>
            <person name="Siemsen T."/>
            <person name="Antonicelli G.E."/>
            <person name="Rasche N."/>
            <person name="Lueder F."/>
            <person name="Weckwerth W."/>
            <person name="Jahn O."/>
        </authorList>
    </citation>
    <scope>SUBCELLULAR LOCATION</scope>
    <scope>IDENTIFICATION BY MASS SPECTROMETRY</scope>
</reference>
<reference key="7">
    <citation type="journal article" date="2009" name="Plant Physiol.">
        <title>Large-scale Arabidopsis phosphoproteome profiling reveals novel chloroplast kinase substrates and phosphorylation networks.</title>
        <authorList>
            <person name="Reiland S."/>
            <person name="Messerli G."/>
            <person name="Baerenfaller K."/>
            <person name="Gerrits B."/>
            <person name="Endler A."/>
            <person name="Grossmann J."/>
            <person name="Gruissem W."/>
            <person name="Baginsky S."/>
        </authorList>
    </citation>
    <scope>IDENTIFICATION BY MASS SPECTROMETRY [LARGE SCALE ANALYSIS]</scope>
</reference>
<reference key="8">
    <citation type="journal article" date="2010" name="BMC Plant Biol.">
        <title>Functional characterization of Arabidopsis thaliana transthyretin-like protein.</title>
        <authorList>
            <person name="Pessoa J."/>
            <person name="Sarkany Z."/>
            <person name="Ferreira-da-Silva F."/>
            <person name="Martins S."/>
            <person name="Almeida M.R."/>
            <person name="Li J."/>
            <person name="Damas A.M."/>
        </authorList>
    </citation>
    <scope>FUNCTION</scope>
    <scope>SUBUNIT</scope>
    <scope>CATALYTIC ACTIVITY</scope>
    <scope>PATHWAY</scope>
</reference>
<reference key="9">
    <citation type="journal article" date="2010" name="Plant Cell">
        <title>Conserved alternative splicing of Arabidopsis transthyretin-like determines protein localization and S-allantoin synthesis in peroxisomes.</title>
        <authorList>
            <person name="Lamberto I."/>
            <person name="Percudani R."/>
            <person name="Gatti R."/>
            <person name="Folli C."/>
            <person name="Petrucco S."/>
        </authorList>
    </citation>
    <scope>FUNCTION</scope>
    <scope>CATALYTIC ACTIVITY</scope>
    <scope>PATHWAY</scope>
    <scope>ALTERNATIVE SPLICING</scope>
    <scope>SUBCELLULAR LOCATION</scope>
    <scope>TISSUE SPECIFICITY</scope>
    <source>
        <strain>cv. Columbia</strain>
    </source>
</reference>
<reference key="10">
    <citation type="journal article" date="2012" name="Mol. Cell. Proteomics">
        <title>Comparative large-scale characterisation of plant vs. mammal proteins reveals similar and idiosyncratic N-alpha acetylation features.</title>
        <authorList>
            <person name="Bienvenut W.V."/>
            <person name="Sumpton D."/>
            <person name="Martinez A."/>
            <person name="Lilla S."/>
            <person name="Espagne C."/>
            <person name="Meinnel T."/>
            <person name="Giglione C."/>
        </authorList>
    </citation>
    <scope>ACETYLATION [LARGE SCALE ANALYSIS] AT ALA-2</scope>
    <scope>CLEAVAGE OF INITIATOR METHIONINE [LARGE SCALE ANALYSIS]</scope>
    <scope>IDENTIFICATION BY MASS SPECTROMETRY [LARGE SCALE ANALYSIS]</scope>
</reference>
<reference key="11">
    <citation type="journal article" date="2020" name="BMC Plant Biol.">
        <title>TRANSTHYRETIN-LIKE and BYPASS1-LIKE co-regulate growth and cold tolerance in Arabidopsis.</title>
        <authorList>
            <person name="Chen T."/>
            <person name="Zhang W."/>
            <person name="Yang G."/>
            <person name="Chen J.-H."/>
            <person name="Chen B.-X."/>
            <person name="Sun R."/>
            <person name="Zhang H."/>
            <person name="An L.-Z."/>
        </authorList>
    </citation>
    <scope>FUNCTION</scope>
    <scope>DISRUPTION PHENOTYPE</scope>
    <scope>INTERACTION WITH B1L</scope>
    <source>
        <strain>cv. Columbia</strain>
    </source>
</reference>
<reference key="12">
    <citation type="journal article" date="2007" name="J. Biol. Chem.">
        <title>Structural and functional basis for (S)-allantoin formation in the ureide pathway.</title>
        <authorList>
            <person name="Kim K."/>
            <person name="Park J."/>
            <person name="Rhee S."/>
        </authorList>
    </citation>
    <scope>X-RAY CRYSTALLOGRAPHY (2.50 ANGSTROMS) OF 1-161 IN COMPLEX WITH (S)-ALLANTOIN</scope>
    <scope>SUBUNIT</scope>
    <scope>REACTION MECHANISM</scope>
    <scope>ACTIVE SITE</scope>
</reference>
<feature type="initiator methionine" description="Removed" evidence="19">
    <location>
        <position position="1"/>
    </location>
</feature>
<feature type="chain" id="PRO_0000050606" description="Uric acid degradation bifunctional protein TTL">
    <location>
        <begin position="2"/>
        <end position="324"/>
    </location>
</feature>
<feature type="region of interest" description="OHCU decarboxylase" evidence="1">
    <location>
        <begin position="2"/>
        <end position="161"/>
    </location>
</feature>
<feature type="region of interest" description="Required for BRI1-binding" evidence="2">
    <location>
        <begin position="2"/>
        <end position="29"/>
    </location>
</feature>
<feature type="region of interest" description="HIU hydrolase" evidence="1">
    <location>
        <begin position="178"/>
        <end position="324"/>
    </location>
</feature>
<feature type="short sequence motif" description="Internal peroxisomal targeting signal (PTS2)" evidence="15">
    <location>
        <begin position="182"/>
        <end position="190"/>
    </location>
</feature>
<feature type="active site" description="Proton donor; for OHCU decarboxylase activity" evidence="3">
    <location>
        <position position="58"/>
    </location>
</feature>
<feature type="binding site" evidence="3 18">
    <location>
        <position position="58"/>
    </location>
    <ligand>
        <name>(S)-allantoin</name>
        <dbReference type="ChEBI" id="CHEBI:15678"/>
    </ligand>
</feature>
<feature type="binding site" evidence="3 18">
    <location>
        <position position="59"/>
    </location>
    <ligand>
        <name>(S)-allantoin</name>
        <dbReference type="ChEBI" id="CHEBI:15678"/>
    </ligand>
</feature>
<feature type="binding site" evidence="3 18">
    <location>
        <position position="80"/>
    </location>
    <ligand>
        <name>(S)-allantoin</name>
        <dbReference type="ChEBI" id="CHEBI:15678"/>
    </ligand>
</feature>
<feature type="binding site" evidence="3 18">
    <location>
        <position position="111"/>
    </location>
    <ligand>
        <name>(S)-allantoin</name>
        <dbReference type="ChEBI" id="CHEBI:15678"/>
    </ligand>
</feature>
<feature type="binding site" evidence="3 18">
    <location>
        <position position="113"/>
    </location>
    <ligand>
        <name>(S)-allantoin</name>
        <dbReference type="ChEBI" id="CHEBI:15678"/>
    </ligand>
</feature>
<feature type="binding site" evidence="3 18">
    <location>
        <position position="115"/>
    </location>
    <ligand>
        <name>(S)-allantoin</name>
        <dbReference type="ChEBI" id="CHEBI:15678"/>
    </ligand>
</feature>
<feature type="modified residue" description="N-acetylalanine" evidence="19">
    <location>
        <position position="2"/>
    </location>
</feature>
<feature type="splice variant" id="VSP_030135" description="In isoform 3." evidence="13">
    <location>
        <begin position="181"/>
        <end position="218"/>
    </location>
</feature>
<feature type="splice variant" id="VSP_030136" description="In isoform 2." evidence="10 12">
    <location>
        <begin position="181"/>
        <end position="193"/>
    </location>
</feature>
<feature type="mutagenesis site" description="Lost ability to interact with BRI1." evidence="2">
    <location>
        <begin position="2"/>
        <end position="29"/>
    </location>
</feature>
<feature type="helix" evidence="20">
    <location>
        <begin position="9"/>
        <end position="11"/>
    </location>
</feature>
<feature type="strand" evidence="20">
    <location>
        <begin position="13"/>
        <end position="15"/>
    </location>
</feature>
<feature type="helix" evidence="20">
    <location>
        <begin position="17"/>
        <end position="24"/>
    </location>
</feature>
<feature type="helix" evidence="20">
    <location>
        <begin position="31"/>
        <end position="44"/>
    </location>
</feature>
<feature type="helix" evidence="20">
    <location>
        <begin position="48"/>
        <end position="56"/>
    </location>
</feature>
<feature type="helix" evidence="20">
    <location>
        <begin position="82"/>
        <end position="85"/>
    </location>
</feature>
<feature type="helix" evidence="20">
    <location>
        <begin position="90"/>
        <end position="107"/>
    </location>
</feature>
<feature type="helix" evidence="20">
    <location>
        <begin position="120"/>
        <end position="130"/>
    </location>
</feature>
<feature type="helix" evidence="20">
    <location>
        <begin position="135"/>
        <end position="158"/>
    </location>
</feature>
<organism>
    <name type="scientific">Arabidopsis thaliana</name>
    <name type="common">Mouse-ear cress</name>
    <dbReference type="NCBI Taxonomy" id="3702"/>
    <lineage>
        <taxon>Eukaryota</taxon>
        <taxon>Viridiplantae</taxon>
        <taxon>Streptophyta</taxon>
        <taxon>Embryophyta</taxon>
        <taxon>Tracheophyta</taxon>
        <taxon>Spermatophyta</taxon>
        <taxon>Magnoliopsida</taxon>
        <taxon>eudicotyledons</taxon>
        <taxon>Gunneridae</taxon>
        <taxon>Pentapetalae</taxon>
        <taxon>rosids</taxon>
        <taxon>malvids</taxon>
        <taxon>Brassicales</taxon>
        <taxon>Brassicaceae</taxon>
        <taxon>Camelineae</taxon>
        <taxon>Arabidopsis</taxon>
    </lineage>
</organism>
<keyword id="KW-0002">3D-structure</keyword>
<keyword id="KW-0007">Acetylation</keyword>
<keyword id="KW-0025">Alternative splicing</keyword>
<keyword id="KW-1003">Cell membrane</keyword>
<keyword id="KW-0963">Cytoplasm</keyword>
<keyword id="KW-0210">Decarboxylase</keyword>
<keyword id="KW-0378">Hydrolase</keyword>
<keyword id="KW-0456">Lyase</keyword>
<keyword id="KW-0472">Membrane</keyword>
<keyword id="KW-0511">Multifunctional enzyme</keyword>
<keyword id="KW-0576">Peroxisome</keyword>
<keyword id="KW-0597">Phosphoprotein</keyword>
<keyword id="KW-0659">Purine metabolism</keyword>
<keyword id="KW-1185">Reference proteome</keyword>
<protein>
    <recommendedName>
        <fullName evidence="14">Uric acid degradation bifunctional protein TTL</fullName>
    </recommendedName>
    <alternativeName>
        <fullName evidence="8 11">Transthyretin-like protein</fullName>
    </alternativeName>
    <domain>
        <recommendedName>
            <fullName evidence="9">2-oxo-4-hydroxy-4-carboxy-5-ureidoimidazoline decarboxylase</fullName>
            <shortName evidence="9">OHCU decarboxylase</shortName>
            <ecNumber evidence="5 6">4.1.1.97</ecNumber>
        </recommendedName>
    </domain>
    <domain>
        <recommendedName>
            <fullName evidence="9">5-hydroxyisourate hydrolase</fullName>
            <shortName evidence="9">HIU hydrolase</shortName>
            <shortName evidence="9">HIUHase</shortName>
            <ecNumber evidence="5 6">3.5.2.17</ecNumber>
        </recommendedName>
    </domain>
</protein>
<dbReference type="EC" id="4.1.1.97" evidence="5 6"/>
<dbReference type="EC" id="3.5.2.17" evidence="5 6"/>
<dbReference type="EMBL" id="AB019228">
    <property type="protein sequence ID" value="BAA96913.1"/>
    <property type="molecule type" value="Genomic_DNA"/>
</dbReference>
<dbReference type="EMBL" id="CP002688">
    <property type="protein sequence ID" value="AED97018.1"/>
    <property type="molecule type" value="Genomic_DNA"/>
</dbReference>
<dbReference type="EMBL" id="CP002688">
    <property type="protein sequence ID" value="AED97019.1"/>
    <property type="molecule type" value="Genomic_DNA"/>
</dbReference>
<dbReference type="EMBL" id="CP002688">
    <property type="protein sequence ID" value="AED97020.1"/>
    <property type="molecule type" value="Genomic_DNA"/>
</dbReference>
<dbReference type="EMBL" id="AY062771">
    <property type="protein sequence ID" value="AAL32849.1"/>
    <property type="molecule type" value="mRNA"/>
</dbReference>
<dbReference type="EMBL" id="AY081647">
    <property type="protein sequence ID" value="AAM10209.1"/>
    <property type="molecule type" value="mRNA"/>
</dbReference>
<dbReference type="EMBL" id="AK226943">
    <property type="protein sequence ID" value="BAE99013.1"/>
    <property type="molecule type" value="mRNA"/>
</dbReference>
<dbReference type="RefSeq" id="NP_001032093.1">
    <molecule id="Q9LVM5-3"/>
    <property type="nucleotide sequence ID" value="NM_001037016.2"/>
</dbReference>
<dbReference type="RefSeq" id="NP_001032094.1">
    <molecule id="Q9LVM5-2"/>
    <property type="nucleotide sequence ID" value="NM_001037017.3"/>
</dbReference>
<dbReference type="RefSeq" id="NP_200630.1">
    <molecule id="Q9LVM5-1"/>
    <property type="nucleotide sequence ID" value="NM_125207.5"/>
</dbReference>
<dbReference type="PDB" id="2Q37">
    <property type="method" value="X-ray"/>
    <property type="resolution" value="2.50 A"/>
    <property type="chains" value="A=1-161"/>
</dbReference>
<dbReference type="PDBsum" id="2Q37"/>
<dbReference type="SMR" id="Q9LVM5"/>
<dbReference type="BioGRID" id="21178">
    <property type="interactions" value="6"/>
</dbReference>
<dbReference type="FunCoup" id="Q9LVM5">
    <property type="interactions" value="784"/>
</dbReference>
<dbReference type="IntAct" id="Q9LVM5">
    <property type="interactions" value="3"/>
</dbReference>
<dbReference type="STRING" id="3702.Q9LVM5"/>
<dbReference type="TCDB" id="9.B.35.1.3">
    <property type="family name" value="the putative thyronine-transporting transthyretin (transthyretin) family"/>
</dbReference>
<dbReference type="iPTMnet" id="Q9LVM5"/>
<dbReference type="PaxDb" id="3702-AT5G58220.1"/>
<dbReference type="ProteomicsDB" id="234627">
    <molecule id="Q9LVM5-1"/>
</dbReference>
<dbReference type="DNASU" id="835934"/>
<dbReference type="EnsemblPlants" id="AT5G58220.1">
    <molecule id="Q9LVM5-1"/>
    <property type="protein sequence ID" value="AT5G58220.1"/>
    <property type="gene ID" value="AT5G58220"/>
</dbReference>
<dbReference type="EnsemblPlants" id="AT5G58220.2">
    <molecule id="Q9LVM5-3"/>
    <property type="protein sequence ID" value="AT5G58220.2"/>
    <property type="gene ID" value="AT5G58220"/>
</dbReference>
<dbReference type="EnsemblPlants" id="AT5G58220.3">
    <molecule id="Q9LVM5-2"/>
    <property type="protein sequence ID" value="AT5G58220.3"/>
    <property type="gene ID" value="AT5G58220"/>
</dbReference>
<dbReference type="GeneID" id="835934"/>
<dbReference type="Gramene" id="AT5G58220.1">
    <molecule id="Q9LVM5-1"/>
    <property type="protein sequence ID" value="AT5G58220.1"/>
    <property type="gene ID" value="AT5G58220"/>
</dbReference>
<dbReference type="Gramene" id="AT5G58220.2">
    <molecule id="Q9LVM5-3"/>
    <property type="protein sequence ID" value="AT5G58220.2"/>
    <property type="gene ID" value="AT5G58220"/>
</dbReference>
<dbReference type="Gramene" id="AT5G58220.3">
    <molecule id="Q9LVM5-2"/>
    <property type="protein sequence ID" value="AT5G58220.3"/>
    <property type="gene ID" value="AT5G58220"/>
</dbReference>
<dbReference type="KEGG" id="ath:AT5G58220"/>
<dbReference type="Araport" id="AT5G58220"/>
<dbReference type="TAIR" id="AT5G58220">
    <property type="gene designation" value="TTL"/>
</dbReference>
<dbReference type="eggNOG" id="KOG3006">
    <property type="taxonomic scope" value="Eukaryota"/>
</dbReference>
<dbReference type="HOGENOM" id="CLU_050809_0_0_1"/>
<dbReference type="InParanoid" id="Q9LVM5"/>
<dbReference type="OMA" id="EPEGHYH"/>
<dbReference type="OrthoDB" id="10265230at2759"/>
<dbReference type="PhylomeDB" id="Q9LVM5"/>
<dbReference type="BioCyc" id="ARA:AT5G58220-MONOMER"/>
<dbReference type="BioCyc" id="MetaCyc:AT5G58220-MONOMER"/>
<dbReference type="BRENDA" id="4.1.1.97">
    <property type="organism ID" value="399"/>
</dbReference>
<dbReference type="UniPathway" id="UPA00394">
    <property type="reaction ID" value="UER00651"/>
</dbReference>
<dbReference type="UniPathway" id="UPA00394">
    <property type="reaction ID" value="UER00652"/>
</dbReference>
<dbReference type="EvolutionaryTrace" id="Q9LVM5"/>
<dbReference type="PRO" id="PR:Q9LVM5"/>
<dbReference type="Proteomes" id="UP000006548">
    <property type="component" value="Chromosome 5"/>
</dbReference>
<dbReference type="ExpressionAtlas" id="Q9LVM5">
    <property type="expression patterns" value="baseline and differential"/>
</dbReference>
<dbReference type="GO" id="GO:0009898">
    <property type="term" value="C:cytoplasmic side of plasma membrane"/>
    <property type="evidence" value="ECO:0000314"/>
    <property type="project" value="UniProtKB"/>
</dbReference>
<dbReference type="GO" id="GO:0005829">
    <property type="term" value="C:cytosol"/>
    <property type="evidence" value="ECO:0000314"/>
    <property type="project" value="UniProtKB"/>
</dbReference>
<dbReference type="GO" id="GO:0031234">
    <property type="term" value="C:extrinsic component of cytoplasmic side of plasma membrane"/>
    <property type="evidence" value="ECO:0000314"/>
    <property type="project" value="TAIR"/>
</dbReference>
<dbReference type="GO" id="GO:0005777">
    <property type="term" value="C:peroxisome"/>
    <property type="evidence" value="ECO:0000314"/>
    <property type="project" value="UniProtKB"/>
</dbReference>
<dbReference type="GO" id="GO:0051997">
    <property type="term" value="F:2-oxo-4-hydroxy-4-carboxy-5-ureidoimidazoline decarboxylase activity"/>
    <property type="evidence" value="ECO:0000314"/>
    <property type="project" value="UniProtKB"/>
</dbReference>
<dbReference type="GO" id="GO:0033971">
    <property type="term" value="F:hydroxyisourate hydrolase activity"/>
    <property type="evidence" value="ECO:0000314"/>
    <property type="project" value="UniProtKB"/>
</dbReference>
<dbReference type="GO" id="GO:0042802">
    <property type="term" value="F:identical protein binding"/>
    <property type="evidence" value="ECO:0000353"/>
    <property type="project" value="IntAct"/>
</dbReference>
<dbReference type="GO" id="GO:0019428">
    <property type="term" value="P:allantoin biosynthetic process"/>
    <property type="evidence" value="ECO:0000314"/>
    <property type="project" value="UniProtKB"/>
</dbReference>
<dbReference type="GO" id="GO:0009742">
    <property type="term" value="P:brassinosteroid mediated signaling pathway"/>
    <property type="evidence" value="ECO:0000315"/>
    <property type="project" value="TAIR"/>
</dbReference>
<dbReference type="GO" id="GO:0009631">
    <property type="term" value="P:cold acclimation"/>
    <property type="evidence" value="ECO:0000315"/>
    <property type="project" value="UniProtKB"/>
</dbReference>
<dbReference type="GO" id="GO:0051262">
    <property type="term" value="P:protein tetramerization"/>
    <property type="evidence" value="ECO:0000314"/>
    <property type="project" value="UniProtKB"/>
</dbReference>
<dbReference type="GO" id="GO:0006144">
    <property type="term" value="P:purine nucleobase metabolic process"/>
    <property type="evidence" value="ECO:0007669"/>
    <property type="project" value="UniProtKB-KW"/>
</dbReference>
<dbReference type="GO" id="GO:1900457">
    <property type="term" value="P:regulation of brassinosteroid mediated signaling pathway"/>
    <property type="evidence" value="ECO:0000315"/>
    <property type="project" value="UniProtKB"/>
</dbReference>
<dbReference type="GO" id="GO:0001560">
    <property type="term" value="P:regulation of cell growth by extracellular stimulus"/>
    <property type="evidence" value="ECO:0000315"/>
    <property type="project" value="TAIR"/>
</dbReference>
<dbReference type="GO" id="GO:1900140">
    <property type="term" value="P:regulation of seedling development"/>
    <property type="evidence" value="ECO:0000315"/>
    <property type="project" value="UniProtKB"/>
</dbReference>
<dbReference type="GO" id="GO:0009741">
    <property type="term" value="P:response to brassinosteroid"/>
    <property type="evidence" value="ECO:0000315"/>
    <property type="project" value="UniProtKB"/>
</dbReference>
<dbReference type="GO" id="GO:0019628">
    <property type="term" value="P:urate catabolic process"/>
    <property type="evidence" value="ECO:0007669"/>
    <property type="project" value="UniProtKB-UniPathway"/>
</dbReference>
<dbReference type="CDD" id="cd05822">
    <property type="entry name" value="TLP_HIUase"/>
    <property type="match status" value="1"/>
</dbReference>
<dbReference type="FunFam" id="1.10.3330.10:FF:000002">
    <property type="entry name" value="Uric acid degradation bifunctional protein TTL"/>
    <property type="match status" value="1"/>
</dbReference>
<dbReference type="FunFam" id="2.60.40.180:FF:000003">
    <property type="entry name" value="Uric acid degradation bifunctional protein TTL"/>
    <property type="match status" value="1"/>
</dbReference>
<dbReference type="Gene3D" id="1.10.3330.10">
    <property type="entry name" value="Oxo-4-hydroxy-4-carboxy-5-ureidoimidazoline decarboxylase"/>
    <property type="match status" value="1"/>
</dbReference>
<dbReference type="Gene3D" id="2.60.40.180">
    <property type="entry name" value="Transthyretin/hydroxyisourate hydrolase domain"/>
    <property type="match status" value="1"/>
</dbReference>
<dbReference type="InterPro" id="IPR017129">
    <property type="entry name" value="HIU_hydrol/OHCU_decarb"/>
</dbReference>
<dbReference type="InterPro" id="IPR014306">
    <property type="entry name" value="Hydroxyisourate_hydrolase"/>
</dbReference>
<dbReference type="InterPro" id="IPR018020">
    <property type="entry name" value="OHCU_decarboxylase"/>
</dbReference>
<dbReference type="InterPro" id="IPR036778">
    <property type="entry name" value="OHCU_decarboxylase_sf"/>
</dbReference>
<dbReference type="InterPro" id="IPR023418">
    <property type="entry name" value="Thyroxine_BS"/>
</dbReference>
<dbReference type="InterPro" id="IPR000895">
    <property type="entry name" value="Transthyretin/HIU_hydrolase"/>
</dbReference>
<dbReference type="InterPro" id="IPR023416">
    <property type="entry name" value="Transthyretin/HIU_hydrolase_d"/>
</dbReference>
<dbReference type="InterPro" id="IPR036817">
    <property type="entry name" value="Transthyretin/HIU_hydrolase_sf"/>
</dbReference>
<dbReference type="InterPro" id="IPR023419">
    <property type="entry name" value="Transthyretin_CS"/>
</dbReference>
<dbReference type="NCBIfam" id="TIGR02962">
    <property type="entry name" value="hdxy_isourate"/>
    <property type="match status" value="1"/>
</dbReference>
<dbReference type="PANTHER" id="PTHR43466">
    <property type="entry name" value="2-OXO-4-HYDROXY-4-CARBOXY-5-UREIDOIMIDAZOLINE DECARBOXYLASE-RELATED"/>
    <property type="match status" value="1"/>
</dbReference>
<dbReference type="PANTHER" id="PTHR43466:SF1">
    <property type="entry name" value="2-OXO-4-HYDROXY-4-CARBOXY-5-UREIDOIMIDAZOLINE DECARBOXYLASE-RELATED"/>
    <property type="match status" value="1"/>
</dbReference>
<dbReference type="Pfam" id="PF09349">
    <property type="entry name" value="OHCU_decarbox"/>
    <property type="match status" value="1"/>
</dbReference>
<dbReference type="Pfam" id="PF00576">
    <property type="entry name" value="Transthyretin"/>
    <property type="match status" value="1"/>
</dbReference>
<dbReference type="PIRSF" id="PIRSF037178">
    <property type="entry name" value="UCP037178_transthyretin"/>
    <property type="match status" value="1"/>
</dbReference>
<dbReference type="PRINTS" id="PR00189">
    <property type="entry name" value="TRNSTHYRETIN"/>
</dbReference>
<dbReference type="SUPFAM" id="SSF49472">
    <property type="entry name" value="Transthyretin (synonym: prealbumin)"/>
    <property type="match status" value="1"/>
</dbReference>
<dbReference type="SUPFAM" id="SSF158694">
    <property type="entry name" value="UraD-Like"/>
    <property type="match status" value="1"/>
</dbReference>
<dbReference type="PROSITE" id="PS00768">
    <property type="entry name" value="TRANSTHYRETIN_1"/>
    <property type="match status" value="1"/>
</dbReference>
<dbReference type="PROSITE" id="PS00769">
    <property type="entry name" value="TRANSTHYRETIN_2"/>
    <property type="match status" value="1"/>
</dbReference>
<accession>Q9LVM5</accession>
<accession>Q2V2X6</accession>
<accession>Q2V2X7</accession>
<sequence>MAMEIGEDEWKVCCGSSEFAKQMSTSGPLTSQEAIYTARDIWFNQVNVTDWLEAFSAHPQIGNTPSPSINSDFARRSVSEQSTAFATTSASALQELAEWNVLYKKKFGFIFIICASGRTHAEMLHALKERYENRPIVELEIAAMEQMKITELRMAKLFSDKAKVISETDSSSSPVSTKPQDRLRIIGGHLNVAAEAKAPKRSRPPITTHVLDVSRGAPAAGVEVHLEVWSGTTGPSFVHGGGGVWSSVGTSATDRDGRSGPLMDLVDALNPGTYRISFDTAKYSPGCFFPYVSIVFQVTESQKWEHFHVPLLLAPFSFSTYRGS</sequence>
<name>TTHL_ARATH</name>
<gene>
    <name evidence="8 11" type="primary">TTL</name>
    <name evidence="16" type="ordered locus">At5g58220</name>
    <name evidence="17" type="ORF">MCK7.9</name>
</gene>
<evidence type="ECO:0000255" key="1"/>
<evidence type="ECO:0000269" key="2">
    <source>
    </source>
</evidence>
<evidence type="ECO:0000269" key="3">
    <source>
    </source>
</evidence>
<evidence type="ECO:0000269" key="4">
    <source>
    </source>
</evidence>
<evidence type="ECO:0000269" key="5">
    <source>
    </source>
</evidence>
<evidence type="ECO:0000269" key="6">
    <source>
    </source>
</evidence>
<evidence type="ECO:0000269" key="7">
    <source>
    </source>
</evidence>
<evidence type="ECO:0000303" key="8">
    <source>
    </source>
</evidence>
<evidence type="ECO:0000303" key="9">
    <source>
    </source>
</evidence>
<evidence type="ECO:0000303" key="10">
    <source>
    </source>
</evidence>
<evidence type="ECO:0000303" key="11">
    <source>
    </source>
</evidence>
<evidence type="ECO:0000303" key="12">
    <source ref="5"/>
</evidence>
<evidence type="ECO:0000305" key="13"/>
<evidence type="ECO:0000305" key="14">
    <source>
    </source>
</evidence>
<evidence type="ECO:0000305" key="15">
    <source>
    </source>
</evidence>
<evidence type="ECO:0000312" key="16">
    <source>
        <dbReference type="Araport" id="AT5G58220"/>
    </source>
</evidence>
<evidence type="ECO:0000312" key="17">
    <source>
        <dbReference type="EMBL" id="BAA96913.1"/>
    </source>
</evidence>
<evidence type="ECO:0007744" key="18">
    <source>
        <dbReference type="PDB" id="2Q37"/>
    </source>
</evidence>
<evidence type="ECO:0007744" key="19">
    <source>
    </source>
</evidence>
<evidence type="ECO:0007829" key="20">
    <source>
        <dbReference type="PDB" id="2Q37"/>
    </source>
</evidence>